<name>CAIA_ECO5E</name>
<sequence length="380" mass="42558">MDFNLNDEQELFVAGIRELMASENWEAYFAECDRDSVYPERFVKALADMGIDSLLIPEEHGGLDAGFVTLAAVWMELGRLGAPTYVLYQLPGGFNTFLREGTQEQIDKIMAFRGTGKQMWNSAITEPGAGSDVGSLKTTYTRRNGKIYLNGSKCFITSSAYTPYIVVMARDGASPDKPVYTEWFVDMSKPGIKVTKLEKLGLRMDSCCEITFDDVELDEKDMFGREGNGFNRVKEEFDHERFLVALTNYGTAMCAFEDAARYANQRVQFGEAIGRFQLIQEKFAHMAIKLNSMKNMLYEAAWKADNGTITSGDAAMCKYFCANAAFEVVDSAMQVLGGVGIAGNHRISRFWRDLRVDRVSGGSDEMQILTLGRAVLKQYR</sequence>
<keyword id="KW-0963">Cytoplasm</keyword>
<keyword id="KW-0274">FAD</keyword>
<keyword id="KW-0285">Flavoprotein</keyword>
<keyword id="KW-0560">Oxidoreductase</keyword>
<dbReference type="EC" id="1.3.8.13" evidence="1"/>
<dbReference type="EMBL" id="CP001164">
    <property type="protein sequence ID" value="ACI38363.1"/>
    <property type="molecule type" value="Genomic_DNA"/>
</dbReference>
<dbReference type="RefSeq" id="WP_000347117.1">
    <property type="nucleotide sequence ID" value="NC_011353.1"/>
</dbReference>
<dbReference type="SMR" id="B5YYD3"/>
<dbReference type="GeneID" id="93777396"/>
<dbReference type="KEGG" id="ecf:ECH74115_0043"/>
<dbReference type="HOGENOM" id="CLU_018204_0_2_6"/>
<dbReference type="UniPathway" id="UPA00117"/>
<dbReference type="GO" id="GO:0005737">
    <property type="term" value="C:cytoplasm"/>
    <property type="evidence" value="ECO:0007669"/>
    <property type="project" value="UniProtKB-SubCell"/>
</dbReference>
<dbReference type="GO" id="GO:0003995">
    <property type="term" value="F:acyl-CoA dehydrogenase activity"/>
    <property type="evidence" value="ECO:0007669"/>
    <property type="project" value="InterPro"/>
</dbReference>
<dbReference type="GO" id="GO:0050660">
    <property type="term" value="F:flavin adenine dinucleotide binding"/>
    <property type="evidence" value="ECO:0007669"/>
    <property type="project" value="InterPro"/>
</dbReference>
<dbReference type="GO" id="GO:0009437">
    <property type="term" value="P:carnitine metabolic process"/>
    <property type="evidence" value="ECO:0007669"/>
    <property type="project" value="UniProtKB-UniRule"/>
</dbReference>
<dbReference type="CDD" id="cd00567">
    <property type="entry name" value="ACAD"/>
    <property type="match status" value="1"/>
</dbReference>
<dbReference type="FunFam" id="1.20.140.10:FF:000001">
    <property type="entry name" value="Acyl-CoA dehydrogenase"/>
    <property type="match status" value="1"/>
</dbReference>
<dbReference type="FunFam" id="2.40.110.10:FF:000002">
    <property type="entry name" value="Acyl-CoA dehydrogenase fadE12"/>
    <property type="match status" value="1"/>
</dbReference>
<dbReference type="FunFam" id="1.10.540.10:FF:000005">
    <property type="entry name" value="Crotonobetainyl-CoA reductase"/>
    <property type="match status" value="1"/>
</dbReference>
<dbReference type="Gene3D" id="1.10.540.10">
    <property type="entry name" value="Acyl-CoA dehydrogenase/oxidase, N-terminal domain"/>
    <property type="match status" value="1"/>
</dbReference>
<dbReference type="Gene3D" id="2.40.110.10">
    <property type="entry name" value="Butyryl-CoA Dehydrogenase, subunit A, domain 2"/>
    <property type="match status" value="1"/>
</dbReference>
<dbReference type="Gene3D" id="1.20.140.10">
    <property type="entry name" value="Butyryl-CoA Dehydrogenase, subunit A, domain 3"/>
    <property type="match status" value="1"/>
</dbReference>
<dbReference type="HAMAP" id="MF_01052">
    <property type="entry name" value="CaiA"/>
    <property type="match status" value="1"/>
</dbReference>
<dbReference type="InterPro" id="IPR006089">
    <property type="entry name" value="Acyl-CoA_DH_CS"/>
</dbReference>
<dbReference type="InterPro" id="IPR006091">
    <property type="entry name" value="Acyl-CoA_Oxase/DH_mid-dom"/>
</dbReference>
<dbReference type="InterPro" id="IPR046373">
    <property type="entry name" value="Acyl-CoA_Oxase/DH_mid-dom_sf"/>
</dbReference>
<dbReference type="InterPro" id="IPR036250">
    <property type="entry name" value="AcylCo_DH-like_C"/>
</dbReference>
<dbReference type="InterPro" id="IPR009075">
    <property type="entry name" value="AcylCo_DH/oxidase_C"/>
</dbReference>
<dbReference type="InterPro" id="IPR013786">
    <property type="entry name" value="AcylCoA_DH/ox_N"/>
</dbReference>
<dbReference type="InterPro" id="IPR037069">
    <property type="entry name" value="AcylCoA_DH/ox_N_sf"/>
</dbReference>
<dbReference type="InterPro" id="IPR009100">
    <property type="entry name" value="AcylCoA_DH/oxidase_NM_dom_sf"/>
</dbReference>
<dbReference type="InterPro" id="IPR023450">
    <property type="entry name" value="CaiA"/>
</dbReference>
<dbReference type="NCBIfam" id="NF002885">
    <property type="entry name" value="PRK03354.1"/>
    <property type="match status" value="1"/>
</dbReference>
<dbReference type="PANTHER" id="PTHR43884">
    <property type="entry name" value="ACYL-COA DEHYDROGENASE"/>
    <property type="match status" value="1"/>
</dbReference>
<dbReference type="PANTHER" id="PTHR43884:SF12">
    <property type="entry name" value="ISOVALERYL-COA DEHYDROGENASE, MITOCHONDRIAL-RELATED"/>
    <property type="match status" value="1"/>
</dbReference>
<dbReference type="Pfam" id="PF00441">
    <property type="entry name" value="Acyl-CoA_dh_1"/>
    <property type="match status" value="1"/>
</dbReference>
<dbReference type="Pfam" id="PF02770">
    <property type="entry name" value="Acyl-CoA_dh_M"/>
    <property type="match status" value="1"/>
</dbReference>
<dbReference type="Pfam" id="PF02771">
    <property type="entry name" value="Acyl-CoA_dh_N"/>
    <property type="match status" value="1"/>
</dbReference>
<dbReference type="PIRSF" id="PIRSF016578">
    <property type="entry name" value="HsaA"/>
    <property type="match status" value="1"/>
</dbReference>
<dbReference type="SUPFAM" id="SSF47203">
    <property type="entry name" value="Acyl-CoA dehydrogenase C-terminal domain-like"/>
    <property type="match status" value="1"/>
</dbReference>
<dbReference type="SUPFAM" id="SSF56645">
    <property type="entry name" value="Acyl-CoA dehydrogenase NM domain-like"/>
    <property type="match status" value="1"/>
</dbReference>
<dbReference type="PROSITE" id="PS00072">
    <property type="entry name" value="ACYL_COA_DH_1"/>
    <property type="match status" value="1"/>
</dbReference>
<dbReference type="PROSITE" id="PS00073">
    <property type="entry name" value="ACYL_COA_DH_2"/>
    <property type="match status" value="1"/>
</dbReference>
<protein>
    <recommendedName>
        <fullName evidence="1">Crotonobetainyl-CoA reductase</fullName>
        <ecNumber evidence="1">1.3.8.13</ecNumber>
    </recommendedName>
    <alternativeName>
        <fullName evidence="1">Crotonobetainyl-CoA dehydrogenase</fullName>
    </alternativeName>
</protein>
<reference key="1">
    <citation type="journal article" date="2011" name="Proc. Natl. Acad. Sci. U.S.A.">
        <title>Genomic anatomy of Escherichia coli O157:H7 outbreaks.</title>
        <authorList>
            <person name="Eppinger M."/>
            <person name="Mammel M.K."/>
            <person name="Leclerc J.E."/>
            <person name="Ravel J."/>
            <person name="Cebula T.A."/>
        </authorList>
    </citation>
    <scope>NUCLEOTIDE SEQUENCE [LARGE SCALE GENOMIC DNA]</scope>
    <source>
        <strain>EC4115 / EHEC</strain>
    </source>
</reference>
<accession>B5YYD3</accession>
<organism>
    <name type="scientific">Escherichia coli O157:H7 (strain EC4115 / EHEC)</name>
    <dbReference type="NCBI Taxonomy" id="444450"/>
    <lineage>
        <taxon>Bacteria</taxon>
        <taxon>Pseudomonadati</taxon>
        <taxon>Pseudomonadota</taxon>
        <taxon>Gammaproteobacteria</taxon>
        <taxon>Enterobacterales</taxon>
        <taxon>Enterobacteriaceae</taxon>
        <taxon>Escherichia</taxon>
    </lineage>
</organism>
<evidence type="ECO:0000255" key="1">
    <source>
        <dbReference type="HAMAP-Rule" id="MF_01052"/>
    </source>
</evidence>
<comment type="function">
    <text evidence="1">Catalyzes the reduction of crotonobetainyl-CoA to gamma-butyrobetainyl-CoA.</text>
</comment>
<comment type="catalytic activity">
    <reaction evidence="1">
        <text>4-(trimethylamino)butanoyl-CoA + oxidized [electron-transfer flavoprotein] + H(+) = crotonobetainyl-CoA + reduced [electron-transfer flavoprotein]</text>
        <dbReference type="Rhea" id="RHEA:51584"/>
        <dbReference type="Rhea" id="RHEA-COMP:10685"/>
        <dbReference type="Rhea" id="RHEA-COMP:10686"/>
        <dbReference type="ChEBI" id="CHEBI:15378"/>
        <dbReference type="ChEBI" id="CHEBI:57692"/>
        <dbReference type="ChEBI" id="CHEBI:58307"/>
        <dbReference type="ChEBI" id="CHEBI:60933"/>
        <dbReference type="ChEBI" id="CHEBI:61513"/>
        <dbReference type="EC" id="1.3.8.13"/>
    </reaction>
</comment>
<comment type="cofactor">
    <cofactor evidence="1">
        <name>FAD</name>
        <dbReference type="ChEBI" id="CHEBI:57692"/>
    </cofactor>
</comment>
<comment type="pathway">
    <text evidence="1">Amine and polyamine metabolism; carnitine metabolism.</text>
</comment>
<comment type="subunit">
    <text evidence="1">Homotetramer.</text>
</comment>
<comment type="subcellular location">
    <subcellularLocation>
        <location evidence="1">Cytoplasm</location>
    </subcellularLocation>
</comment>
<comment type="similarity">
    <text evidence="1">Belongs to the acyl-CoA dehydrogenase family.</text>
</comment>
<gene>
    <name evidence="1" type="primary">caiA</name>
    <name type="ordered locus">ECH74115_0043</name>
</gene>
<feature type="chain" id="PRO_1000136269" description="Crotonobetainyl-CoA reductase">
    <location>
        <begin position="1"/>
        <end position="380"/>
    </location>
</feature>
<proteinExistence type="inferred from homology"/>